<sequence length="447" mass="50531">MAPPRCRREKLNSTVAEGGVQAADGQRCQRGLPLLGAVPQAAPYTRNNGMGECRRGHRQGHRAEVHDNRPADKVGQGRWLNSQTRRPCRKEVTSFQFFPFLIFHTGGAEMEPLEIMDEGEGPLVGWCDPDEFREWVRDNKSREMADKTMSAEEAVSNFIKDGMYVASGGFGHVRVSMNIIYEIIRQGVKGLTMAGKTSVHDLDVLMAAGCVEKVEAAYSFGHELRGLSPASRRKVEGGEVKVITEWSNAALQWRFKAAAMGLPFIPARILMGTDTFKKSSAKIIRDPYSGKPVTLIPACFPDVAIIHVHRADKYGNAQIDGILVEDYELARAAKRLIVTTEEIVPTDKIRESPWRTSIPYFLVDAVVEQPFASHPCNMPLLYYFDEEHIAEYLALTRTEEGAKEYFEKYVYGVNDFWEYLEVVGGSKRLEKLRRIEQLRERPVYPWR</sequence>
<feature type="chain" id="PRO_0000157929" description="Uncharacterized protein AF_1199">
    <location>
        <begin position="1"/>
        <end position="447"/>
    </location>
</feature>
<feature type="region of interest" description="Disordered" evidence="1">
    <location>
        <begin position="39"/>
        <end position="76"/>
    </location>
</feature>
<feature type="compositionally biased region" description="Basic and acidic residues" evidence="1">
    <location>
        <begin position="61"/>
        <end position="72"/>
    </location>
</feature>
<comment type="similarity">
    <text evidence="2">Belongs to the 3-oxoacid CoA-transferase subunit A family.</text>
</comment>
<name>Y1199_ARCFU</name>
<keyword id="KW-1185">Reference proteome</keyword>
<keyword id="KW-0808">Transferase</keyword>
<proteinExistence type="inferred from homology"/>
<evidence type="ECO:0000256" key="1">
    <source>
        <dbReference type="SAM" id="MobiDB-lite"/>
    </source>
</evidence>
<evidence type="ECO:0000305" key="2"/>
<dbReference type="EMBL" id="AE000782">
    <property type="protein sequence ID" value="AAB90043.1"/>
    <property type="molecule type" value="Genomic_DNA"/>
</dbReference>
<dbReference type="PIR" id="F69399">
    <property type="entry name" value="F69399"/>
</dbReference>
<dbReference type="SMR" id="O29069"/>
<dbReference type="STRING" id="224325.AF_1199"/>
<dbReference type="PaxDb" id="224325-AF_1199"/>
<dbReference type="EnsemblBacteria" id="AAB90043">
    <property type="protein sequence ID" value="AAB90043"/>
    <property type="gene ID" value="AF_1199"/>
</dbReference>
<dbReference type="KEGG" id="afu:AF_1199"/>
<dbReference type="eggNOG" id="arCOG01987">
    <property type="taxonomic scope" value="Archaea"/>
</dbReference>
<dbReference type="HOGENOM" id="CLU_049557_0_0_2"/>
<dbReference type="OrthoDB" id="301771at2157"/>
<dbReference type="PhylomeDB" id="O29069"/>
<dbReference type="Proteomes" id="UP000002199">
    <property type="component" value="Chromosome"/>
</dbReference>
<dbReference type="GO" id="GO:0008410">
    <property type="term" value="F:CoA-transferase activity"/>
    <property type="evidence" value="ECO:0007669"/>
    <property type="project" value="InterPro"/>
</dbReference>
<dbReference type="Gene3D" id="3.30.30.40">
    <property type="match status" value="1"/>
</dbReference>
<dbReference type="Gene3D" id="3.40.1080.10">
    <property type="entry name" value="Glutaconate Coenzyme A-transferase"/>
    <property type="match status" value="1"/>
</dbReference>
<dbReference type="InterPro" id="IPR004165">
    <property type="entry name" value="CoA_trans_fam_I"/>
</dbReference>
<dbReference type="InterPro" id="IPR037171">
    <property type="entry name" value="NagB/RpiA_transferase-like"/>
</dbReference>
<dbReference type="PANTHER" id="PTHR43293">
    <property type="entry name" value="ACETATE COA-TRANSFERASE YDIF"/>
    <property type="match status" value="1"/>
</dbReference>
<dbReference type="PANTHER" id="PTHR43293:SF3">
    <property type="entry name" value="CHOLESTEROL RING-CLEAVING HYDROLASE IPDB SUBUNIT"/>
    <property type="match status" value="1"/>
</dbReference>
<dbReference type="Pfam" id="PF01144">
    <property type="entry name" value="CoA_trans"/>
    <property type="match status" value="1"/>
</dbReference>
<dbReference type="SMART" id="SM00882">
    <property type="entry name" value="CoA_trans"/>
    <property type="match status" value="1"/>
</dbReference>
<dbReference type="SUPFAM" id="SSF100950">
    <property type="entry name" value="NagB/RpiA/CoA transferase-like"/>
    <property type="match status" value="1"/>
</dbReference>
<reference key="1">
    <citation type="journal article" date="1997" name="Nature">
        <title>The complete genome sequence of the hyperthermophilic, sulphate-reducing archaeon Archaeoglobus fulgidus.</title>
        <authorList>
            <person name="Klenk H.-P."/>
            <person name="Clayton R.A."/>
            <person name="Tomb J.-F."/>
            <person name="White O."/>
            <person name="Nelson K.E."/>
            <person name="Ketchum K.A."/>
            <person name="Dodson R.J."/>
            <person name="Gwinn M.L."/>
            <person name="Hickey E.K."/>
            <person name="Peterson J.D."/>
            <person name="Richardson D.L."/>
            <person name="Kerlavage A.R."/>
            <person name="Graham D.E."/>
            <person name="Kyrpides N.C."/>
            <person name="Fleischmann R.D."/>
            <person name="Quackenbush J."/>
            <person name="Lee N.H."/>
            <person name="Sutton G.G."/>
            <person name="Gill S.R."/>
            <person name="Kirkness E.F."/>
            <person name="Dougherty B.A."/>
            <person name="McKenney K."/>
            <person name="Adams M.D."/>
            <person name="Loftus B.J."/>
            <person name="Peterson S.N."/>
            <person name="Reich C.I."/>
            <person name="McNeil L.K."/>
            <person name="Badger J.H."/>
            <person name="Glodek A."/>
            <person name="Zhou L."/>
            <person name="Overbeek R."/>
            <person name="Gocayne J.D."/>
            <person name="Weidman J.F."/>
            <person name="McDonald L.A."/>
            <person name="Utterback T.R."/>
            <person name="Cotton M.D."/>
            <person name="Spriggs T."/>
            <person name="Artiach P."/>
            <person name="Kaine B.P."/>
            <person name="Sykes S.M."/>
            <person name="Sadow P.W."/>
            <person name="D'Andrea K.P."/>
            <person name="Bowman C."/>
            <person name="Fujii C."/>
            <person name="Garland S.A."/>
            <person name="Mason T.M."/>
            <person name="Olsen G.J."/>
            <person name="Fraser C.M."/>
            <person name="Smith H.O."/>
            <person name="Woese C.R."/>
            <person name="Venter J.C."/>
        </authorList>
    </citation>
    <scope>NUCLEOTIDE SEQUENCE [LARGE SCALE GENOMIC DNA]</scope>
    <source>
        <strain>ATCC 49558 / DSM 4304 / JCM 9628 / NBRC 100126 / VC-16</strain>
    </source>
</reference>
<protein>
    <recommendedName>
        <fullName>Uncharacterized protein AF_1199</fullName>
    </recommendedName>
</protein>
<gene>
    <name type="ordered locus">AF_1199</name>
</gene>
<organism>
    <name type="scientific">Archaeoglobus fulgidus (strain ATCC 49558 / DSM 4304 / JCM 9628 / NBRC 100126 / VC-16)</name>
    <dbReference type="NCBI Taxonomy" id="224325"/>
    <lineage>
        <taxon>Archaea</taxon>
        <taxon>Methanobacteriati</taxon>
        <taxon>Methanobacteriota</taxon>
        <taxon>Archaeoglobi</taxon>
        <taxon>Archaeoglobales</taxon>
        <taxon>Archaeoglobaceae</taxon>
        <taxon>Archaeoglobus</taxon>
    </lineage>
</organism>
<accession>O29069</accession>